<name>GUN3_HUMIN</name>
<proteinExistence type="evidence at protein level"/>
<organism>
    <name type="scientific">Humicola insolens</name>
    <name type="common">Soft-rot fungus</name>
    <dbReference type="NCBI Taxonomy" id="85995"/>
    <lineage>
        <taxon>Eukaryota</taxon>
        <taxon>Fungi</taxon>
        <taxon>Dikarya</taxon>
        <taxon>Ascomycota</taxon>
        <taxon>Pezizomycotina</taxon>
        <taxon>Sordariomycetes</taxon>
        <taxon>Sordariomycetidae</taxon>
        <taxon>Sordariales</taxon>
        <taxon>Chaetomiaceae</taxon>
        <taxon>Mycothermus</taxon>
    </lineage>
</organism>
<reference key="1">
    <citation type="journal article" date="1994" name="Mol. Gen. Genet.">
        <title>A novel method for efficient expression cloning of fungal enzyme genes.</title>
        <authorList>
            <person name="Dalboege H."/>
            <person name="Hansen H.P.H."/>
        </authorList>
    </citation>
    <scope>NUCLEOTIDE SEQUENCE [GENOMIC DNA]</scope>
</reference>
<reference key="2">
    <citation type="journal article" date="1997" name="Biosci. Biotechnol. Biochem.">
        <title>Cloning, sequencing, and expression of a thermostable cellulase gene of Humicola grisea.</title>
        <authorList>
            <person name="Takashima S."/>
            <person name="Nakamura A."/>
            <person name="Masaki H."/>
            <person name="Uozumi T."/>
        </authorList>
    </citation>
    <scope>NUCLEOTIDE SEQUENCE [GENOMIC DNA]</scope>
    <scope>FUNCTION</scope>
    <source>
        <strain>IFO 9854</strain>
    </source>
</reference>
<protein>
    <recommendedName>
        <fullName>Endoglucanase 3</fullName>
        <ecNumber>3.2.1.4</ecNumber>
    </recommendedName>
    <alternativeName>
        <fullName>Cellulase 3</fullName>
    </alternativeName>
    <alternativeName>
        <fullName>Endo-1,4-beta-glucanase 3</fullName>
    </alternativeName>
</protein>
<dbReference type="EC" id="3.2.1.4"/>
<dbReference type="EMBL" id="X76046">
    <property type="protein sequence ID" value="CAA53631.1"/>
    <property type="molecule type" value="Genomic_DNA"/>
</dbReference>
<dbReference type="EMBL" id="D84470">
    <property type="protein sequence ID" value="BAA12676.1"/>
    <property type="molecule type" value="Genomic_DNA"/>
</dbReference>
<dbReference type="PIR" id="JC5461">
    <property type="entry name" value="JC5461"/>
</dbReference>
<dbReference type="PIR" id="S43920">
    <property type="entry name" value="S43920"/>
</dbReference>
<dbReference type="SMR" id="Q12624"/>
<dbReference type="CAZy" id="CBM1">
    <property type="family name" value="Carbohydrate-Binding Module Family 1"/>
</dbReference>
<dbReference type="CAZy" id="GH5">
    <property type="family name" value="Glycoside Hydrolase Family 5"/>
</dbReference>
<dbReference type="GlyCosmos" id="Q12624">
    <property type="glycosylation" value="3 sites, No reported glycans"/>
</dbReference>
<dbReference type="GO" id="GO:0005576">
    <property type="term" value="C:extracellular region"/>
    <property type="evidence" value="ECO:0007669"/>
    <property type="project" value="InterPro"/>
</dbReference>
<dbReference type="GO" id="GO:0008810">
    <property type="term" value="F:cellulase activity"/>
    <property type="evidence" value="ECO:0007669"/>
    <property type="project" value="UniProtKB-EC"/>
</dbReference>
<dbReference type="GO" id="GO:0030248">
    <property type="term" value="F:cellulose binding"/>
    <property type="evidence" value="ECO:0007669"/>
    <property type="project" value="InterPro"/>
</dbReference>
<dbReference type="GO" id="GO:0030245">
    <property type="term" value="P:cellulose catabolic process"/>
    <property type="evidence" value="ECO:0007669"/>
    <property type="project" value="UniProtKB-KW"/>
</dbReference>
<dbReference type="FunFam" id="3.20.20.80:FF:000078">
    <property type="entry name" value="Endo-beta-1,4-glucanase B"/>
    <property type="match status" value="1"/>
</dbReference>
<dbReference type="Gene3D" id="3.20.20.80">
    <property type="entry name" value="Glycosidases"/>
    <property type="match status" value="1"/>
</dbReference>
<dbReference type="InterPro" id="IPR035971">
    <property type="entry name" value="CBD_sf"/>
</dbReference>
<dbReference type="InterPro" id="IPR000254">
    <property type="entry name" value="Cellulose-bd_dom_fun"/>
</dbReference>
<dbReference type="InterPro" id="IPR001547">
    <property type="entry name" value="Glyco_hydro_5"/>
</dbReference>
<dbReference type="InterPro" id="IPR017853">
    <property type="entry name" value="Glycoside_hydrolase_SF"/>
</dbReference>
<dbReference type="PANTHER" id="PTHR34142">
    <property type="entry name" value="ENDO-BETA-1,4-GLUCANASE A"/>
    <property type="match status" value="1"/>
</dbReference>
<dbReference type="PANTHER" id="PTHR34142:SF1">
    <property type="entry name" value="GLYCOSIDE HYDROLASE FAMILY 5 DOMAIN-CONTAINING PROTEIN"/>
    <property type="match status" value="1"/>
</dbReference>
<dbReference type="Pfam" id="PF00734">
    <property type="entry name" value="CBM_1"/>
    <property type="match status" value="1"/>
</dbReference>
<dbReference type="Pfam" id="PF00150">
    <property type="entry name" value="Cellulase"/>
    <property type="match status" value="1"/>
</dbReference>
<dbReference type="SMART" id="SM00236">
    <property type="entry name" value="fCBD"/>
    <property type="match status" value="1"/>
</dbReference>
<dbReference type="SUPFAM" id="SSF51445">
    <property type="entry name" value="(Trans)glycosidases"/>
    <property type="match status" value="1"/>
</dbReference>
<dbReference type="SUPFAM" id="SSF57180">
    <property type="entry name" value="Cellulose-binding domain"/>
    <property type="match status" value="1"/>
</dbReference>
<dbReference type="PROSITE" id="PS00562">
    <property type="entry name" value="CBM1_1"/>
    <property type="match status" value="1"/>
</dbReference>
<dbReference type="PROSITE" id="PS51164">
    <property type="entry name" value="CBM1_2"/>
    <property type="match status" value="1"/>
</dbReference>
<accession>Q12624</accession>
<accession>Q12620</accession>
<sequence length="388" mass="42564">MKHSVLAGLFATGALAQGGAWQQCGGVGFSGSTSCVSGYTCVYLNDWYSQCQPQPTTLRTTTTPGATSTTRSAPAATSTTPAKGKFKWFGINQSCAEFGKGEYPGLWGKHFTFPSTSSIQTHINDGFNMFRVAFSMERLAPNQLNAAFDANYLRNLTETVNFITGKGKYAMLDPHNFGRYYERIITDKAAFASFFTKLATHFASNPLVVFDTNNEYHDMDQQLVFDLNQAAIDAIRAAGATSQYIMVEGNSWTGAWTWNVTNNNLAALRDPENKLVYQMHQYLDSDGSGTSTACVSTQVGLQRVIGATNWLRQNGKVGLLGEFAGGANSVCQQAIEGMLTHLQENSDVWTGALWWAGGPWWGDYIYSFEPPSGIGYTYYNSLLKKYVP</sequence>
<keyword id="KW-0119">Carbohydrate metabolism</keyword>
<keyword id="KW-0136">Cellulose degradation</keyword>
<keyword id="KW-1015">Disulfide bond</keyword>
<keyword id="KW-0325">Glycoprotein</keyword>
<keyword id="KW-0326">Glycosidase</keyword>
<keyword id="KW-0378">Hydrolase</keyword>
<keyword id="KW-0624">Polysaccharide degradation</keyword>
<keyword id="KW-0732">Signal</keyword>
<gene>
    <name type="primary">CMC3</name>
</gene>
<evidence type="ECO:0000250" key="1"/>
<evidence type="ECO:0000255" key="2"/>
<evidence type="ECO:0000255" key="3">
    <source>
        <dbReference type="PROSITE-ProRule" id="PRU00597"/>
    </source>
</evidence>
<evidence type="ECO:0000256" key="4">
    <source>
        <dbReference type="SAM" id="MobiDB-lite"/>
    </source>
</evidence>
<evidence type="ECO:0000305" key="5"/>
<comment type="catalytic activity">
    <reaction>
        <text>Endohydrolysis of (1-&gt;4)-beta-D-glucosidic linkages in cellulose, lichenin and cereal beta-D-glucans.</text>
        <dbReference type="EC" id="3.2.1.4"/>
    </reaction>
</comment>
<comment type="biotechnology">
    <text>Used as a detergent cellulase. Sold under the name Celluzyme by Novozymes. This special enzyme has three effects: colour brightening, softening and removal of particulate soil. The overall effect is that it helps to preserve the nice appearance of new fabric and restores old fabric so that it looks new again.</text>
</comment>
<comment type="similarity">
    <text evidence="5">Belongs to the glycosyl hydrolase 5 (cellulase A) family.</text>
</comment>
<feature type="signal peptide" evidence="2">
    <location>
        <begin position="1"/>
        <end position="16"/>
    </location>
</feature>
<feature type="chain" id="PRO_0000007863" description="Endoglucanase 3">
    <location>
        <begin position="17"/>
        <end position="388"/>
    </location>
</feature>
<feature type="domain" description="CBM1" evidence="3">
    <location>
        <begin position="17"/>
        <end position="52"/>
    </location>
</feature>
<feature type="region of interest" description="Linker">
    <location>
        <begin position="53"/>
        <end position="91"/>
    </location>
</feature>
<feature type="region of interest" description="Disordered" evidence="4">
    <location>
        <begin position="56"/>
        <end position="81"/>
    </location>
</feature>
<feature type="region of interest" description="Catalytic">
    <location>
        <begin position="92"/>
        <end position="388"/>
    </location>
</feature>
<feature type="active site" description="Proton donor" evidence="1">
    <location>
        <position position="215"/>
    </location>
</feature>
<feature type="active site" description="Nucleophile" evidence="1">
    <location>
        <position position="322"/>
    </location>
</feature>
<feature type="glycosylation site" description="N-linked (GlcNAc...) asparagine" evidence="2">
    <location>
        <position position="92"/>
    </location>
</feature>
<feature type="glycosylation site" description="N-linked (GlcNAc...) asparagine" evidence="2">
    <location>
        <position position="155"/>
    </location>
</feature>
<feature type="glycosylation site" description="N-linked (GlcNAc...) asparagine" evidence="2">
    <location>
        <position position="259"/>
    </location>
</feature>
<feature type="disulfide bond" evidence="1">
    <location>
        <begin position="24"/>
        <end position="41"/>
    </location>
</feature>
<feature type="disulfide bond" evidence="1">
    <location>
        <begin position="35"/>
        <end position="51"/>
    </location>
</feature>
<feature type="sequence conflict" description="In Ref. 2; BAA12676." evidence="5" ref="2">
    <original>G</original>
    <variation>S</variation>
    <location>
        <position position="8"/>
    </location>
</feature>
<feature type="sequence conflict" description="In Ref. 2; BAA12676." evidence="5" ref="2">
    <original>T</original>
    <variation>N</variation>
    <location>
        <position position="340"/>
    </location>
</feature>